<comment type="function">
    <text evidence="1">Zinc transporter. Acts as a Zn(2+):proton symporter, which likely mediates zinc ion uptake.</text>
</comment>
<comment type="catalytic activity">
    <reaction evidence="1">
        <text>Zn(2+)(out) + H(+)(out) = Zn(2+)(in) + H(+)(in)</text>
        <dbReference type="Rhea" id="RHEA:71195"/>
        <dbReference type="ChEBI" id="CHEBI:15378"/>
        <dbReference type="ChEBI" id="CHEBI:29105"/>
    </reaction>
    <physiologicalReaction direction="left-to-right" evidence="1">
        <dbReference type="Rhea" id="RHEA:71196"/>
    </physiologicalReaction>
</comment>
<comment type="subcellular location">
    <subcellularLocation>
        <location evidence="1">Cell inner membrane</location>
        <topology evidence="1">Multi-pass membrane protein</topology>
    </subcellularLocation>
</comment>
<comment type="similarity">
    <text evidence="1">Belongs to the CorA metal ion transporter (MIT) (TC 1.A.35) family.</text>
</comment>
<name>ZNTB_ECO7I</name>
<evidence type="ECO:0000255" key="1">
    <source>
        <dbReference type="HAMAP-Rule" id="MF_01565"/>
    </source>
</evidence>
<feature type="chain" id="PRO_1000189720" description="Zinc transport protein ZntB">
    <location>
        <begin position="1"/>
        <end position="327"/>
    </location>
</feature>
<feature type="topological domain" description="Cytoplasmic" evidence="1">
    <location>
        <begin position="1"/>
        <end position="273"/>
    </location>
</feature>
<feature type="transmembrane region" description="Helical" evidence="1">
    <location>
        <begin position="274"/>
        <end position="294"/>
    </location>
</feature>
<feature type="topological domain" description="Periplasmic" evidence="1">
    <location>
        <begin position="295"/>
        <end position="300"/>
    </location>
</feature>
<feature type="transmembrane region" description="Helical" evidence="1">
    <location>
        <begin position="301"/>
        <end position="321"/>
    </location>
</feature>
<feature type="topological domain" description="Cytoplasmic" evidence="1">
    <location>
        <begin position="322"/>
        <end position="327"/>
    </location>
</feature>
<protein>
    <recommendedName>
        <fullName evidence="1">Zinc transport protein ZntB</fullName>
    </recommendedName>
</protein>
<gene>
    <name evidence="1" type="primary">zntB</name>
    <name type="ordered locus">ECIAI39_1692</name>
</gene>
<reference key="1">
    <citation type="journal article" date="2009" name="PLoS Genet.">
        <title>Organised genome dynamics in the Escherichia coli species results in highly diverse adaptive paths.</title>
        <authorList>
            <person name="Touchon M."/>
            <person name="Hoede C."/>
            <person name="Tenaillon O."/>
            <person name="Barbe V."/>
            <person name="Baeriswyl S."/>
            <person name="Bidet P."/>
            <person name="Bingen E."/>
            <person name="Bonacorsi S."/>
            <person name="Bouchier C."/>
            <person name="Bouvet O."/>
            <person name="Calteau A."/>
            <person name="Chiapello H."/>
            <person name="Clermont O."/>
            <person name="Cruveiller S."/>
            <person name="Danchin A."/>
            <person name="Diard M."/>
            <person name="Dossat C."/>
            <person name="Karoui M.E."/>
            <person name="Frapy E."/>
            <person name="Garry L."/>
            <person name="Ghigo J.M."/>
            <person name="Gilles A.M."/>
            <person name="Johnson J."/>
            <person name="Le Bouguenec C."/>
            <person name="Lescat M."/>
            <person name="Mangenot S."/>
            <person name="Martinez-Jehanne V."/>
            <person name="Matic I."/>
            <person name="Nassif X."/>
            <person name="Oztas S."/>
            <person name="Petit M.A."/>
            <person name="Pichon C."/>
            <person name="Rouy Z."/>
            <person name="Ruf C.S."/>
            <person name="Schneider D."/>
            <person name="Tourret J."/>
            <person name="Vacherie B."/>
            <person name="Vallenet D."/>
            <person name="Medigue C."/>
            <person name="Rocha E.P.C."/>
            <person name="Denamur E."/>
        </authorList>
    </citation>
    <scope>NUCLEOTIDE SEQUENCE [LARGE SCALE GENOMIC DNA]</scope>
    <source>
        <strain>IAI39 / ExPEC</strain>
    </source>
</reference>
<proteinExistence type="inferred from homology"/>
<organism>
    <name type="scientific">Escherichia coli O7:K1 (strain IAI39 / ExPEC)</name>
    <dbReference type="NCBI Taxonomy" id="585057"/>
    <lineage>
        <taxon>Bacteria</taxon>
        <taxon>Pseudomonadati</taxon>
        <taxon>Pseudomonadota</taxon>
        <taxon>Gammaproteobacteria</taxon>
        <taxon>Enterobacterales</taxon>
        <taxon>Enterobacteriaceae</taxon>
        <taxon>Escherichia</taxon>
    </lineage>
</organism>
<dbReference type="EMBL" id="CU928164">
    <property type="protein sequence ID" value="CAR17823.1"/>
    <property type="molecule type" value="Genomic_DNA"/>
</dbReference>
<dbReference type="RefSeq" id="WP_000387388.1">
    <property type="nucleotide sequence ID" value="NC_011750.1"/>
</dbReference>
<dbReference type="RefSeq" id="YP_002407690.1">
    <property type="nucleotide sequence ID" value="NC_011750.1"/>
</dbReference>
<dbReference type="SMR" id="B7NHP3"/>
<dbReference type="STRING" id="585057.ECIAI39_1692"/>
<dbReference type="GeneID" id="93775479"/>
<dbReference type="KEGG" id="ect:ECIAI39_1692"/>
<dbReference type="PATRIC" id="fig|585057.6.peg.1766"/>
<dbReference type="HOGENOM" id="CLU_007127_2_0_6"/>
<dbReference type="Proteomes" id="UP000000749">
    <property type="component" value="Chromosome"/>
</dbReference>
<dbReference type="GO" id="GO:0005886">
    <property type="term" value="C:plasma membrane"/>
    <property type="evidence" value="ECO:0007669"/>
    <property type="project" value="UniProtKB-SubCell"/>
</dbReference>
<dbReference type="GO" id="GO:0050897">
    <property type="term" value="F:cobalt ion binding"/>
    <property type="evidence" value="ECO:0007669"/>
    <property type="project" value="TreeGrafter"/>
</dbReference>
<dbReference type="GO" id="GO:0015087">
    <property type="term" value="F:cobalt ion transmembrane transporter activity"/>
    <property type="evidence" value="ECO:0007669"/>
    <property type="project" value="TreeGrafter"/>
</dbReference>
<dbReference type="GO" id="GO:0000287">
    <property type="term" value="F:magnesium ion binding"/>
    <property type="evidence" value="ECO:0007669"/>
    <property type="project" value="TreeGrafter"/>
</dbReference>
<dbReference type="GO" id="GO:0015095">
    <property type="term" value="F:magnesium ion transmembrane transporter activity"/>
    <property type="evidence" value="ECO:0007669"/>
    <property type="project" value="TreeGrafter"/>
</dbReference>
<dbReference type="GO" id="GO:0005385">
    <property type="term" value="F:zinc ion transmembrane transporter activity"/>
    <property type="evidence" value="ECO:0007669"/>
    <property type="project" value="UniProtKB-UniRule"/>
</dbReference>
<dbReference type="CDD" id="cd12833">
    <property type="entry name" value="ZntB-like_1"/>
    <property type="match status" value="1"/>
</dbReference>
<dbReference type="FunFam" id="1.20.58.340:FF:000002">
    <property type="entry name" value="Zinc transport protein ZntB"/>
    <property type="match status" value="1"/>
</dbReference>
<dbReference type="FunFam" id="1.20.58.340:FF:000003">
    <property type="entry name" value="Zinc transport protein ZntB"/>
    <property type="match status" value="1"/>
</dbReference>
<dbReference type="FunFam" id="3.30.460.20:FF:000001">
    <property type="entry name" value="Zinc transport protein ZntB"/>
    <property type="match status" value="1"/>
</dbReference>
<dbReference type="Gene3D" id="3.30.460.20">
    <property type="entry name" value="CorA soluble domain-like"/>
    <property type="match status" value="1"/>
</dbReference>
<dbReference type="Gene3D" id="1.20.58.340">
    <property type="entry name" value="Magnesium transport protein CorA, transmembrane region"/>
    <property type="match status" value="2"/>
</dbReference>
<dbReference type="HAMAP" id="MF_01565">
    <property type="entry name" value="ZntB"/>
    <property type="match status" value="1"/>
</dbReference>
<dbReference type="InterPro" id="IPR045861">
    <property type="entry name" value="CorA_cytoplasmic_dom"/>
</dbReference>
<dbReference type="InterPro" id="IPR045863">
    <property type="entry name" value="CorA_TM1_TM2"/>
</dbReference>
<dbReference type="InterPro" id="IPR002523">
    <property type="entry name" value="MgTranspt_CorA/ZnTranspt_ZntB"/>
</dbReference>
<dbReference type="InterPro" id="IPR023714">
    <property type="entry name" value="Zn_transp_ZntB"/>
</dbReference>
<dbReference type="NCBIfam" id="NF007092">
    <property type="entry name" value="PRK09546.1"/>
    <property type="match status" value="1"/>
</dbReference>
<dbReference type="PANTHER" id="PTHR46494">
    <property type="entry name" value="CORA FAMILY METAL ION TRANSPORTER (EUROFUNG)"/>
    <property type="match status" value="1"/>
</dbReference>
<dbReference type="PANTHER" id="PTHR46494:SF3">
    <property type="entry name" value="ZINC TRANSPORT PROTEIN ZNTB"/>
    <property type="match status" value="1"/>
</dbReference>
<dbReference type="Pfam" id="PF01544">
    <property type="entry name" value="CorA"/>
    <property type="match status" value="1"/>
</dbReference>
<dbReference type="SUPFAM" id="SSF143865">
    <property type="entry name" value="CorA soluble domain-like"/>
    <property type="match status" value="1"/>
</dbReference>
<dbReference type="SUPFAM" id="SSF144083">
    <property type="entry name" value="Magnesium transport protein CorA, transmembrane region"/>
    <property type="match status" value="1"/>
</dbReference>
<keyword id="KW-0997">Cell inner membrane</keyword>
<keyword id="KW-1003">Cell membrane</keyword>
<keyword id="KW-0406">Ion transport</keyword>
<keyword id="KW-0472">Membrane</keyword>
<keyword id="KW-0812">Transmembrane</keyword>
<keyword id="KW-1133">Transmembrane helix</keyword>
<keyword id="KW-0813">Transport</keyword>
<keyword id="KW-0862">Zinc</keyword>
<accession>B7NHP3</accession>
<sequence>MEAIKGSDVNVPDAVFAWMLDGRGGVKPLENTDVIDEAHPCWLHLNYVHHDSAQWLATTPLLPNNVRDALAGESTRPRVSRLGEGTLITLRCINGSTDERPDQLVAMRVYMDGRLIVSTRQRKVLALDDVVSDLEEGTGPTDCGGWLVDVCDALTDHSSEFIEQLHDKIIDLEDNLLDQQIPPRGFLALLRKQLIVMRRYMAPQRDVYARLASERLPWMSDDQRRRMQDIADRLGRGLDEIDACIARTGVMADEIAQVMQENLARRTYTMSLMAMVFLPSTFLTGLFGVNLGGIPGGGWQFGFSIFCILLVVLIGGVALWLHRSKWL</sequence>